<reference key="1">
    <citation type="journal article" date="2010" name="J. Bacteriol.">
        <title>Whole genome sequences of two Xylella fastidiosa strains (M12 and M23) causing almond leaf scorch disease in California.</title>
        <authorList>
            <person name="Chen J."/>
            <person name="Xie G."/>
            <person name="Han S."/>
            <person name="Chertkov O."/>
            <person name="Sims D."/>
            <person name="Civerolo E.L."/>
        </authorList>
    </citation>
    <scope>NUCLEOTIDE SEQUENCE [LARGE SCALE GENOMIC DNA]</scope>
    <source>
        <strain>M12</strain>
    </source>
</reference>
<name>CLPX_XYLFM</name>
<organism>
    <name type="scientific">Xylella fastidiosa (strain M12)</name>
    <dbReference type="NCBI Taxonomy" id="405440"/>
    <lineage>
        <taxon>Bacteria</taxon>
        <taxon>Pseudomonadati</taxon>
        <taxon>Pseudomonadota</taxon>
        <taxon>Gammaproteobacteria</taxon>
        <taxon>Lysobacterales</taxon>
        <taxon>Lysobacteraceae</taxon>
        <taxon>Xylella</taxon>
    </lineage>
</organism>
<protein>
    <recommendedName>
        <fullName evidence="1">ATP-dependent Clp protease ATP-binding subunit ClpX</fullName>
    </recommendedName>
</protein>
<comment type="function">
    <text evidence="1">ATP-dependent specificity component of the Clp protease. It directs the protease to specific substrates. Can perform chaperone functions in the absence of ClpP.</text>
</comment>
<comment type="subunit">
    <text evidence="1">Component of the ClpX-ClpP complex. Forms a hexameric ring that, in the presence of ATP, binds to fourteen ClpP subunits assembled into a disk-like structure with a central cavity, resembling the structure of eukaryotic proteasomes.</text>
</comment>
<comment type="similarity">
    <text evidence="1">Belongs to the ClpX chaperone family.</text>
</comment>
<gene>
    <name evidence="1" type="primary">clpX</name>
    <name type="ordered locus">Xfasm12_0530</name>
</gene>
<accession>B0U5N2</accession>
<evidence type="ECO:0000255" key="1">
    <source>
        <dbReference type="HAMAP-Rule" id="MF_00175"/>
    </source>
</evidence>
<evidence type="ECO:0000255" key="2">
    <source>
        <dbReference type="PROSITE-ProRule" id="PRU01250"/>
    </source>
</evidence>
<dbReference type="EMBL" id="CP000941">
    <property type="protein sequence ID" value="ACA11536.1"/>
    <property type="molecule type" value="Genomic_DNA"/>
</dbReference>
<dbReference type="RefSeq" id="WP_004086553.1">
    <property type="nucleotide sequence ID" value="NC_010513.1"/>
</dbReference>
<dbReference type="SMR" id="B0U5N2"/>
<dbReference type="KEGG" id="xfm:Xfasm12_0530"/>
<dbReference type="HOGENOM" id="CLU_014218_8_2_6"/>
<dbReference type="GO" id="GO:0009376">
    <property type="term" value="C:HslUV protease complex"/>
    <property type="evidence" value="ECO:0007669"/>
    <property type="project" value="TreeGrafter"/>
</dbReference>
<dbReference type="GO" id="GO:0005524">
    <property type="term" value="F:ATP binding"/>
    <property type="evidence" value="ECO:0007669"/>
    <property type="project" value="UniProtKB-UniRule"/>
</dbReference>
<dbReference type="GO" id="GO:0016887">
    <property type="term" value="F:ATP hydrolysis activity"/>
    <property type="evidence" value="ECO:0007669"/>
    <property type="project" value="InterPro"/>
</dbReference>
<dbReference type="GO" id="GO:0140662">
    <property type="term" value="F:ATP-dependent protein folding chaperone"/>
    <property type="evidence" value="ECO:0007669"/>
    <property type="project" value="InterPro"/>
</dbReference>
<dbReference type="GO" id="GO:0046983">
    <property type="term" value="F:protein dimerization activity"/>
    <property type="evidence" value="ECO:0007669"/>
    <property type="project" value="InterPro"/>
</dbReference>
<dbReference type="GO" id="GO:0051082">
    <property type="term" value="F:unfolded protein binding"/>
    <property type="evidence" value="ECO:0007669"/>
    <property type="project" value="UniProtKB-UniRule"/>
</dbReference>
<dbReference type="GO" id="GO:0008270">
    <property type="term" value="F:zinc ion binding"/>
    <property type="evidence" value="ECO:0007669"/>
    <property type="project" value="InterPro"/>
</dbReference>
<dbReference type="GO" id="GO:0051301">
    <property type="term" value="P:cell division"/>
    <property type="evidence" value="ECO:0007669"/>
    <property type="project" value="TreeGrafter"/>
</dbReference>
<dbReference type="GO" id="GO:0051603">
    <property type="term" value="P:proteolysis involved in protein catabolic process"/>
    <property type="evidence" value="ECO:0007669"/>
    <property type="project" value="TreeGrafter"/>
</dbReference>
<dbReference type="CDD" id="cd19497">
    <property type="entry name" value="RecA-like_ClpX"/>
    <property type="match status" value="1"/>
</dbReference>
<dbReference type="FunFam" id="1.10.8.60:FF:000002">
    <property type="entry name" value="ATP-dependent Clp protease ATP-binding subunit ClpX"/>
    <property type="match status" value="1"/>
</dbReference>
<dbReference type="FunFam" id="3.40.50.300:FF:000005">
    <property type="entry name" value="ATP-dependent Clp protease ATP-binding subunit ClpX"/>
    <property type="match status" value="1"/>
</dbReference>
<dbReference type="Gene3D" id="1.10.8.60">
    <property type="match status" value="1"/>
</dbReference>
<dbReference type="Gene3D" id="6.20.220.10">
    <property type="entry name" value="ClpX chaperone, C4-type zinc finger domain"/>
    <property type="match status" value="1"/>
</dbReference>
<dbReference type="Gene3D" id="3.40.50.300">
    <property type="entry name" value="P-loop containing nucleotide triphosphate hydrolases"/>
    <property type="match status" value="1"/>
</dbReference>
<dbReference type="HAMAP" id="MF_00175">
    <property type="entry name" value="ClpX"/>
    <property type="match status" value="1"/>
</dbReference>
<dbReference type="InterPro" id="IPR003593">
    <property type="entry name" value="AAA+_ATPase"/>
</dbReference>
<dbReference type="InterPro" id="IPR050052">
    <property type="entry name" value="ATP-dep_Clp_protease_ClpX"/>
</dbReference>
<dbReference type="InterPro" id="IPR003959">
    <property type="entry name" value="ATPase_AAA_core"/>
</dbReference>
<dbReference type="InterPro" id="IPR019489">
    <property type="entry name" value="Clp_ATPase_C"/>
</dbReference>
<dbReference type="InterPro" id="IPR004487">
    <property type="entry name" value="Clp_protease_ATP-bd_su_ClpX"/>
</dbReference>
<dbReference type="InterPro" id="IPR046425">
    <property type="entry name" value="ClpX_bact"/>
</dbReference>
<dbReference type="InterPro" id="IPR027417">
    <property type="entry name" value="P-loop_NTPase"/>
</dbReference>
<dbReference type="InterPro" id="IPR010603">
    <property type="entry name" value="Znf_CppX_C4"/>
</dbReference>
<dbReference type="InterPro" id="IPR038366">
    <property type="entry name" value="Znf_CppX_C4_sf"/>
</dbReference>
<dbReference type="NCBIfam" id="TIGR00382">
    <property type="entry name" value="clpX"/>
    <property type="match status" value="1"/>
</dbReference>
<dbReference type="NCBIfam" id="NF003745">
    <property type="entry name" value="PRK05342.1"/>
    <property type="match status" value="1"/>
</dbReference>
<dbReference type="PANTHER" id="PTHR48102:SF7">
    <property type="entry name" value="ATP-DEPENDENT CLP PROTEASE ATP-BINDING SUBUNIT CLPX-LIKE, MITOCHONDRIAL"/>
    <property type="match status" value="1"/>
</dbReference>
<dbReference type="PANTHER" id="PTHR48102">
    <property type="entry name" value="ATP-DEPENDENT CLP PROTEASE ATP-BINDING SUBUNIT CLPX-LIKE, MITOCHONDRIAL-RELATED"/>
    <property type="match status" value="1"/>
</dbReference>
<dbReference type="Pfam" id="PF07724">
    <property type="entry name" value="AAA_2"/>
    <property type="match status" value="1"/>
</dbReference>
<dbReference type="Pfam" id="PF10431">
    <property type="entry name" value="ClpB_D2-small"/>
    <property type="match status" value="1"/>
</dbReference>
<dbReference type="Pfam" id="PF06689">
    <property type="entry name" value="zf-C4_ClpX"/>
    <property type="match status" value="1"/>
</dbReference>
<dbReference type="SMART" id="SM00382">
    <property type="entry name" value="AAA"/>
    <property type="match status" value="1"/>
</dbReference>
<dbReference type="SMART" id="SM01086">
    <property type="entry name" value="ClpB_D2-small"/>
    <property type="match status" value="1"/>
</dbReference>
<dbReference type="SMART" id="SM00994">
    <property type="entry name" value="zf-C4_ClpX"/>
    <property type="match status" value="1"/>
</dbReference>
<dbReference type="SUPFAM" id="SSF57716">
    <property type="entry name" value="Glucocorticoid receptor-like (DNA-binding domain)"/>
    <property type="match status" value="1"/>
</dbReference>
<dbReference type="SUPFAM" id="SSF52540">
    <property type="entry name" value="P-loop containing nucleoside triphosphate hydrolases"/>
    <property type="match status" value="1"/>
</dbReference>
<dbReference type="PROSITE" id="PS51902">
    <property type="entry name" value="CLPX_ZB"/>
    <property type="match status" value="1"/>
</dbReference>
<proteinExistence type="inferred from homology"/>
<sequence>MSEDRLSRSGDGNKILYCSFCGKSQREVRKLIAGPSVFICDECVELCNDIIREELEEKSQSARSSLPKPKEILEVLDQYVIGQQRAKRTLAVAVYNHYKRIESRHKNDDIELAKSNILLVGPTGSGKTLLAETLARLLNVPFTIADATTLTEAGYVGEDVENIIQKLLQKCDYDVEKAQHGIVYIDEIDKISRKSENPSITRDVSGEGVQQALLKLIEGTVASVPPQGGRKHPQQEFLQVDTKNILFICGGAFAGLDKVIQQRCTEAGGIGFGVKVKSSESKRDVGKVLAGVEPEDLIKFGLIPEFVGRLPVVATLDELDESALVKILTEPKNAITKQFKKLFEMENVELEFRQDALSAVARKALKRKTGARGLRTIVELVLLDTMYELPSQEGISKVVVDESVIENKSEPYLIYQTMPAKVASGE</sequence>
<keyword id="KW-0067">ATP-binding</keyword>
<keyword id="KW-0143">Chaperone</keyword>
<keyword id="KW-0479">Metal-binding</keyword>
<keyword id="KW-0547">Nucleotide-binding</keyword>
<keyword id="KW-0862">Zinc</keyword>
<feature type="chain" id="PRO_1000098020" description="ATP-dependent Clp protease ATP-binding subunit ClpX">
    <location>
        <begin position="1"/>
        <end position="426"/>
    </location>
</feature>
<feature type="domain" description="ClpX-type ZB" evidence="2">
    <location>
        <begin position="6"/>
        <end position="59"/>
    </location>
</feature>
<feature type="binding site" evidence="2">
    <location>
        <position position="18"/>
    </location>
    <ligand>
        <name>Zn(2+)</name>
        <dbReference type="ChEBI" id="CHEBI:29105"/>
    </ligand>
</feature>
<feature type="binding site" evidence="2">
    <location>
        <position position="21"/>
    </location>
    <ligand>
        <name>Zn(2+)</name>
        <dbReference type="ChEBI" id="CHEBI:29105"/>
    </ligand>
</feature>
<feature type="binding site" evidence="2">
    <location>
        <position position="40"/>
    </location>
    <ligand>
        <name>Zn(2+)</name>
        <dbReference type="ChEBI" id="CHEBI:29105"/>
    </ligand>
</feature>
<feature type="binding site" evidence="2">
    <location>
        <position position="43"/>
    </location>
    <ligand>
        <name>Zn(2+)</name>
        <dbReference type="ChEBI" id="CHEBI:29105"/>
    </ligand>
</feature>
<feature type="binding site" evidence="1">
    <location>
        <begin position="122"/>
        <end position="129"/>
    </location>
    <ligand>
        <name>ATP</name>
        <dbReference type="ChEBI" id="CHEBI:30616"/>
    </ligand>
</feature>